<evidence type="ECO:0000255" key="1">
    <source>
        <dbReference type="HAMAP-Rule" id="MF_01595"/>
    </source>
</evidence>
<evidence type="ECO:0000256" key="2">
    <source>
        <dbReference type="SAM" id="MobiDB-lite"/>
    </source>
</evidence>
<reference key="1">
    <citation type="submission" date="2006-12" db="EMBL/GenBank/DDBJ databases">
        <authorList>
            <person name="Hendrix L."/>
            <person name="Mohamoud Y."/>
            <person name="Radune D."/>
            <person name="Shvartsbeyn A."/>
            <person name="Daugherty S."/>
            <person name="Dodson R."/>
            <person name="Durkin A.S."/>
            <person name="Harkins D."/>
            <person name="Huot H."/>
            <person name="Kothari S.P."/>
            <person name="Madupu R."/>
            <person name="Li J."/>
            <person name="Nelson W.C."/>
            <person name="Shrivastava S."/>
            <person name="Giglio M.G."/>
            <person name="Haft D."/>
            <person name="Selengut J."/>
            <person name="Fraser-Ligget C."/>
            <person name="Seshadri R."/>
        </authorList>
    </citation>
    <scope>NUCLEOTIDE SEQUENCE [LARGE SCALE GENOMIC DNA]</scope>
    <source>
        <strain>ATCC 35685 / KC583 / Herrer 020/F12,63</strain>
    </source>
</reference>
<keyword id="KW-0963">Cytoplasm</keyword>
<keyword id="KW-0460">Magnesium</keyword>
<keyword id="KW-0479">Metal-binding</keyword>
<keyword id="KW-0548">Nucleotidyltransferase</keyword>
<keyword id="KW-0694">RNA-binding</keyword>
<keyword id="KW-0808">Transferase</keyword>
<feature type="chain" id="PRO_0000329526" description="Polyribonucleotide nucleotidyltransferase">
    <location>
        <begin position="1"/>
        <end position="733"/>
    </location>
</feature>
<feature type="domain" description="KH" evidence="1">
    <location>
        <begin position="555"/>
        <end position="614"/>
    </location>
</feature>
<feature type="domain" description="S1 motif" evidence="1">
    <location>
        <begin position="624"/>
        <end position="692"/>
    </location>
</feature>
<feature type="region of interest" description="Disordered" evidence="2">
    <location>
        <begin position="698"/>
        <end position="733"/>
    </location>
</feature>
<feature type="compositionally biased region" description="Basic and acidic residues" evidence="2">
    <location>
        <begin position="702"/>
        <end position="721"/>
    </location>
</feature>
<feature type="compositionally biased region" description="Basic residues" evidence="2">
    <location>
        <begin position="722"/>
        <end position="733"/>
    </location>
</feature>
<feature type="binding site" evidence="1">
    <location>
        <position position="488"/>
    </location>
    <ligand>
        <name>Mg(2+)</name>
        <dbReference type="ChEBI" id="CHEBI:18420"/>
    </ligand>
</feature>
<feature type="binding site" evidence="1">
    <location>
        <position position="494"/>
    </location>
    <ligand>
        <name>Mg(2+)</name>
        <dbReference type="ChEBI" id="CHEBI:18420"/>
    </ligand>
</feature>
<comment type="function">
    <text evidence="1">Involved in mRNA degradation. Catalyzes the phosphorolysis of single-stranded polyribonucleotides processively in the 3'- to 5'-direction.</text>
</comment>
<comment type="catalytic activity">
    <reaction evidence="1">
        <text>RNA(n+1) + phosphate = RNA(n) + a ribonucleoside 5'-diphosphate</text>
        <dbReference type="Rhea" id="RHEA:22096"/>
        <dbReference type="Rhea" id="RHEA-COMP:14527"/>
        <dbReference type="Rhea" id="RHEA-COMP:17342"/>
        <dbReference type="ChEBI" id="CHEBI:43474"/>
        <dbReference type="ChEBI" id="CHEBI:57930"/>
        <dbReference type="ChEBI" id="CHEBI:140395"/>
        <dbReference type="EC" id="2.7.7.8"/>
    </reaction>
</comment>
<comment type="cofactor">
    <cofactor evidence="1">
        <name>Mg(2+)</name>
        <dbReference type="ChEBI" id="CHEBI:18420"/>
    </cofactor>
</comment>
<comment type="subcellular location">
    <subcellularLocation>
        <location evidence="1">Cytoplasm</location>
    </subcellularLocation>
</comment>
<comment type="similarity">
    <text evidence="1">Belongs to the polyribonucleotide nucleotidyltransferase family.</text>
</comment>
<organism>
    <name type="scientific">Bartonella bacilliformis (strain ATCC 35685 / KC583 / Herrer 020/F12,63)</name>
    <dbReference type="NCBI Taxonomy" id="360095"/>
    <lineage>
        <taxon>Bacteria</taxon>
        <taxon>Pseudomonadati</taxon>
        <taxon>Pseudomonadota</taxon>
        <taxon>Alphaproteobacteria</taxon>
        <taxon>Hyphomicrobiales</taxon>
        <taxon>Bartonellaceae</taxon>
        <taxon>Bartonella</taxon>
    </lineage>
</organism>
<sequence>MFKTHKVEIEWAGRPLTIETGRVARQADGAVVATYGETVVLATVVSAKAPKPDQDFFPLTVNYQEKTYAVGKIPGGYFKRESRPSENETLISRLIDRPIRPLFVDDYKNDTQVIVSVIQHDLENNPDILSMIAASAALTLSGIPFMGPIAGARVGYCNGHYVLNPTLDEMPESKLDLVVAGTENAVLMVESEAHELSEEVMLGAITFGQKGFQPVIDAIIQLAEVAAKEPREFIPEDFSDLEKTMLKMIEKDLRKAYTITDKQQRYDAIDAIKTEILSKFAPEMEVNCELTADKIATVFKRLQAKIVRWNILDTGKRIDGRDLSTVRPIQSEVGILPRTHGSALFTRGETQALVVATLGTSEDEQYVDLLTGVCKETFLLHYNFPPFSVGETGRLSSPGRREIGHGKLAWRAIHPMLPTKEAFPYTIRVVSEITESNGSSSMATVCGTSLALMDAGVPLARPVAGIAMGLIKEGERFVILSDILGDEDHLGDMDFKVAGTKNGITSLQMDIKIDGITEDIMKIALEQAKDGRNHILNEMAKALTDARTELSEFSPRIEMMTIPVEKIREVIGSGGKVIREIVEQTGAKINIEDDGTIKIASPDTKSIETAKSWIHSIVDEPEVGTIYQGTVVKTTEFGAFINFFGSHDGLVHISQLASKRVAKTTDVVKEGDKVWVQLMGFDERGKIRLSMKVVDQQTGKEIPQDDLIKTEKEQNPDEKNKSEKKRHNRKKED</sequence>
<proteinExistence type="inferred from homology"/>
<accession>A1UU54</accession>
<name>PNP_BARBK</name>
<protein>
    <recommendedName>
        <fullName evidence="1">Polyribonucleotide nucleotidyltransferase</fullName>
        <ecNumber evidence="1">2.7.7.8</ecNumber>
    </recommendedName>
    <alternativeName>
        <fullName evidence="1">Polynucleotide phosphorylase</fullName>
        <shortName evidence="1">PNPase</shortName>
    </alternativeName>
</protein>
<gene>
    <name evidence="1" type="primary">pnp</name>
    <name type="ordered locus">BARBAKC583_1258</name>
</gene>
<dbReference type="EC" id="2.7.7.8" evidence="1"/>
<dbReference type="EMBL" id="CP000524">
    <property type="protein sequence ID" value="ABM45418.1"/>
    <property type="molecule type" value="Genomic_DNA"/>
</dbReference>
<dbReference type="RefSeq" id="WP_005767993.1">
    <property type="nucleotide sequence ID" value="NC_008783.1"/>
</dbReference>
<dbReference type="SMR" id="A1UU54"/>
<dbReference type="STRING" id="360095.BARBAKC583_1258"/>
<dbReference type="GeneID" id="4684005"/>
<dbReference type="KEGG" id="bbk:BARBAKC583_1258"/>
<dbReference type="PATRIC" id="fig|360095.6.peg.1234"/>
<dbReference type="eggNOG" id="COG1185">
    <property type="taxonomic scope" value="Bacteria"/>
</dbReference>
<dbReference type="HOGENOM" id="CLU_004217_2_2_5"/>
<dbReference type="OrthoDB" id="9804305at2"/>
<dbReference type="Proteomes" id="UP000000643">
    <property type="component" value="Chromosome"/>
</dbReference>
<dbReference type="GO" id="GO:0005829">
    <property type="term" value="C:cytosol"/>
    <property type="evidence" value="ECO:0007669"/>
    <property type="project" value="TreeGrafter"/>
</dbReference>
<dbReference type="GO" id="GO:0000175">
    <property type="term" value="F:3'-5'-RNA exonuclease activity"/>
    <property type="evidence" value="ECO:0007669"/>
    <property type="project" value="TreeGrafter"/>
</dbReference>
<dbReference type="GO" id="GO:0000287">
    <property type="term" value="F:magnesium ion binding"/>
    <property type="evidence" value="ECO:0007669"/>
    <property type="project" value="UniProtKB-UniRule"/>
</dbReference>
<dbReference type="GO" id="GO:0004654">
    <property type="term" value="F:polyribonucleotide nucleotidyltransferase activity"/>
    <property type="evidence" value="ECO:0007669"/>
    <property type="project" value="UniProtKB-UniRule"/>
</dbReference>
<dbReference type="GO" id="GO:0003723">
    <property type="term" value="F:RNA binding"/>
    <property type="evidence" value="ECO:0007669"/>
    <property type="project" value="UniProtKB-UniRule"/>
</dbReference>
<dbReference type="GO" id="GO:0006402">
    <property type="term" value="P:mRNA catabolic process"/>
    <property type="evidence" value="ECO:0007669"/>
    <property type="project" value="UniProtKB-UniRule"/>
</dbReference>
<dbReference type="GO" id="GO:0006396">
    <property type="term" value="P:RNA processing"/>
    <property type="evidence" value="ECO:0007669"/>
    <property type="project" value="InterPro"/>
</dbReference>
<dbReference type="CDD" id="cd02393">
    <property type="entry name" value="KH-I_PNPase"/>
    <property type="match status" value="1"/>
</dbReference>
<dbReference type="CDD" id="cd11363">
    <property type="entry name" value="RNase_PH_PNPase_1"/>
    <property type="match status" value="1"/>
</dbReference>
<dbReference type="CDD" id="cd11364">
    <property type="entry name" value="RNase_PH_PNPase_2"/>
    <property type="match status" value="1"/>
</dbReference>
<dbReference type="CDD" id="cd04472">
    <property type="entry name" value="S1_PNPase"/>
    <property type="match status" value="1"/>
</dbReference>
<dbReference type="FunFam" id="2.40.50.140:FF:000107">
    <property type="entry name" value="Polyribonucleotide nucleotidyltransferase"/>
    <property type="match status" value="1"/>
</dbReference>
<dbReference type="FunFam" id="3.30.1370.10:FF:000001">
    <property type="entry name" value="Polyribonucleotide nucleotidyltransferase"/>
    <property type="match status" value="1"/>
</dbReference>
<dbReference type="FunFam" id="3.30.230.70:FF:000001">
    <property type="entry name" value="Polyribonucleotide nucleotidyltransferase"/>
    <property type="match status" value="1"/>
</dbReference>
<dbReference type="FunFam" id="3.30.230.70:FF:000002">
    <property type="entry name" value="Polyribonucleotide nucleotidyltransferase"/>
    <property type="match status" value="1"/>
</dbReference>
<dbReference type="Gene3D" id="3.30.230.70">
    <property type="entry name" value="GHMP Kinase, N-terminal domain"/>
    <property type="match status" value="2"/>
</dbReference>
<dbReference type="Gene3D" id="3.30.1370.10">
    <property type="entry name" value="K Homology domain, type 1"/>
    <property type="match status" value="1"/>
</dbReference>
<dbReference type="Gene3D" id="2.40.50.140">
    <property type="entry name" value="Nucleic acid-binding proteins"/>
    <property type="match status" value="1"/>
</dbReference>
<dbReference type="HAMAP" id="MF_01595">
    <property type="entry name" value="PNPase"/>
    <property type="match status" value="1"/>
</dbReference>
<dbReference type="InterPro" id="IPR001247">
    <property type="entry name" value="ExoRNase_PH_dom1"/>
</dbReference>
<dbReference type="InterPro" id="IPR015847">
    <property type="entry name" value="ExoRNase_PH_dom2"/>
</dbReference>
<dbReference type="InterPro" id="IPR036345">
    <property type="entry name" value="ExoRNase_PH_dom2_sf"/>
</dbReference>
<dbReference type="InterPro" id="IPR004087">
    <property type="entry name" value="KH_dom"/>
</dbReference>
<dbReference type="InterPro" id="IPR004088">
    <property type="entry name" value="KH_dom_type_1"/>
</dbReference>
<dbReference type="InterPro" id="IPR036612">
    <property type="entry name" value="KH_dom_type_1_sf"/>
</dbReference>
<dbReference type="InterPro" id="IPR012340">
    <property type="entry name" value="NA-bd_OB-fold"/>
</dbReference>
<dbReference type="InterPro" id="IPR012162">
    <property type="entry name" value="PNPase"/>
</dbReference>
<dbReference type="InterPro" id="IPR027408">
    <property type="entry name" value="PNPase/RNase_PH_dom_sf"/>
</dbReference>
<dbReference type="InterPro" id="IPR015848">
    <property type="entry name" value="PNPase_PH_RNA-bd_bac/org-type"/>
</dbReference>
<dbReference type="InterPro" id="IPR020568">
    <property type="entry name" value="Ribosomal_Su5_D2-typ_SF"/>
</dbReference>
<dbReference type="InterPro" id="IPR003029">
    <property type="entry name" value="S1_domain"/>
</dbReference>
<dbReference type="NCBIfam" id="TIGR03591">
    <property type="entry name" value="polynuc_phos"/>
    <property type="match status" value="1"/>
</dbReference>
<dbReference type="NCBIfam" id="NF008805">
    <property type="entry name" value="PRK11824.1"/>
    <property type="match status" value="1"/>
</dbReference>
<dbReference type="PANTHER" id="PTHR11252">
    <property type="entry name" value="POLYRIBONUCLEOTIDE NUCLEOTIDYLTRANSFERASE"/>
    <property type="match status" value="1"/>
</dbReference>
<dbReference type="PANTHER" id="PTHR11252:SF0">
    <property type="entry name" value="POLYRIBONUCLEOTIDE NUCLEOTIDYLTRANSFERASE 1, MITOCHONDRIAL"/>
    <property type="match status" value="1"/>
</dbReference>
<dbReference type="Pfam" id="PF00013">
    <property type="entry name" value="KH_1"/>
    <property type="match status" value="1"/>
</dbReference>
<dbReference type="Pfam" id="PF03726">
    <property type="entry name" value="PNPase"/>
    <property type="match status" value="1"/>
</dbReference>
<dbReference type="Pfam" id="PF01138">
    <property type="entry name" value="RNase_PH"/>
    <property type="match status" value="2"/>
</dbReference>
<dbReference type="Pfam" id="PF03725">
    <property type="entry name" value="RNase_PH_C"/>
    <property type="match status" value="2"/>
</dbReference>
<dbReference type="Pfam" id="PF00575">
    <property type="entry name" value="S1"/>
    <property type="match status" value="1"/>
</dbReference>
<dbReference type="PIRSF" id="PIRSF005499">
    <property type="entry name" value="PNPase"/>
    <property type="match status" value="1"/>
</dbReference>
<dbReference type="SMART" id="SM00322">
    <property type="entry name" value="KH"/>
    <property type="match status" value="1"/>
</dbReference>
<dbReference type="SMART" id="SM00316">
    <property type="entry name" value="S1"/>
    <property type="match status" value="1"/>
</dbReference>
<dbReference type="SUPFAM" id="SSF54791">
    <property type="entry name" value="Eukaryotic type KH-domain (KH-domain type I)"/>
    <property type="match status" value="1"/>
</dbReference>
<dbReference type="SUPFAM" id="SSF50249">
    <property type="entry name" value="Nucleic acid-binding proteins"/>
    <property type="match status" value="1"/>
</dbReference>
<dbReference type="SUPFAM" id="SSF55666">
    <property type="entry name" value="Ribonuclease PH domain 2-like"/>
    <property type="match status" value="2"/>
</dbReference>
<dbReference type="SUPFAM" id="SSF54211">
    <property type="entry name" value="Ribosomal protein S5 domain 2-like"/>
    <property type="match status" value="2"/>
</dbReference>
<dbReference type="PROSITE" id="PS50084">
    <property type="entry name" value="KH_TYPE_1"/>
    <property type="match status" value="1"/>
</dbReference>
<dbReference type="PROSITE" id="PS50126">
    <property type="entry name" value="S1"/>
    <property type="match status" value="1"/>
</dbReference>